<name>HLDE_YERPS</name>
<sequence length="476" mass="51202">MKVTLPDFRRAGVLVVGDVMLDRYWYGPTSRISPEAPVPVVKVDTIEERPGGAANVAMNIASLGAVARLVGLTGIDDAARALICKLSEVRVRCDFVSVPTHPTITKLRVLSRNQQLIRLDFEEGFDGVDPTPIFERIQLALPQIGALVLSDYAKGALNSVQPMIQLARKANVPVLIDPKGSDFERYRGATLLTPNLSEFEAVVGRCKNEEELVNRGMQLVADFELSALLVTRSEQGMTLLQLGKPPLHLPTQAKEVFDVTGAGDTVIGVLAAALAAGNSLEESCFLANAAAGVVVGKLGTSTVSPIELENAIRGRAETGFGVMDEQQLKIAVAQARQRGEKVVMTNGIFDILHAGHVSYLANARKLGDRLIVAVNSDASTKRLKGEKRPVNPLEQRMVVLGALEAVDWVVPFEEDTPQRLIADILPDLLVKGGDYKPHEIAGSEEVWAAGGEVKVLNFEDGVSTTNIIQSIKNGRG</sequence>
<evidence type="ECO:0000255" key="1">
    <source>
        <dbReference type="HAMAP-Rule" id="MF_01603"/>
    </source>
</evidence>
<dbReference type="EC" id="2.7.1.167" evidence="1"/>
<dbReference type="EC" id="2.7.7.70" evidence="1"/>
<dbReference type="EMBL" id="BX936398">
    <property type="protein sequence ID" value="CAH22645.1"/>
    <property type="molecule type" value="Genomic_DNA"/>
</dbReference>
<dbReference type="RefSeq" id="WP_011193099.1">
    <property type="nucleotide sequence ID" value="NC_006155.1"/>
</dbReference>
<dbReference type="SMR" id="Q665V3"/>
<dbReference type="GeneID" id="49784608"/>
<dbReference type="KEGG" id="ypo:BZ17_3201"/>
<dbReference type="KEGG" id="yps:YPTB3407"/>
<dbReference type="PATRIC" id="fig|273123.14.peg.3352"/>
<dbReference type="UniPathway" id="UPA00356">
    <property type="reaction ID" value="UER00437"/>
</dbReference>
<dbReference type="UniPathway" id="UPA00356">
    <property type="reaction ID" value="UER00439"/>
</dbReference>
<dbReference type="Proteomes" id="UP000001011">
    <property type="component" value="Chromosome"/>
</dbReference>
<dbReference type="GO" id="GO:0005829">
    <property type="term" value="C:cytosol"/>
    <property type="evidence" value="ECO:0007669"/>
    <property type="project" value="TreeGrafter"/>
</dbReference>
<dbReference type="GO" id="GO:0005524">
    <property type="term" value="F:ATP binding"/>
    <property type="evidence" value="ECO:0007669"/>
    <property type="project" value="UniProtKB-UniRule"/>
</dbReference>
<dbReference type="GO" id="GO:0033785">
    <property type="term" value="F:heptose 7-phosphate kinase activity"/>
    <property type="evidence" value="ECO:0007669"/>
    <property type="project" value="UniProtKB-UniRule"/>
</dbReference>
<dbReference type="GO" id="GO:0033786">
    <property type="term" value="F:heptose-1-phosphate adenylyltransferase activity"/>
    <property type="evidence" value="ECO:0007669"/>
    <property type="project" value="UniProtKB-UniRule"/>
</dbReference>
<dbReference type="GO" id="GO:0016773">
    <property type="term" value="F:phosphotransferase activity, alcohol group as acceptor"/>
    <property type="evidence" value="ECO:0007669"/>
    <property type="project" value="InterPro"/>
</dbReference>
<dbReference type="GO" id="GO:0097171">
    <property type="term" value="P:ADP-L-glycero-beta-D-manno-heptose biosynthetic process"/>
    <property type="evidence" value="ECO:0007669"/>
    <property type="project" value="UniProtKB-UniPathway"/>
</dbReference>
<dbReference type="CDD" id="cd01172">
    <property type="entry name" value="RfaE_like"/>
    <property type="match status" value="1"/>
</dbReference>
<dbReference type="FunFam" id="3.40.1190.20:FF:000002">
    <property type="entry name" value="Bifunctional protein HldE"/>
    <property type="match status" value="1"/>
</dbReference>
<dbReference type="FunFam" id="3.40.50.620:FF:000028">
    <property type="entry name" value="Bifunctional protein HldE"/>
    <property type="match status" value="1"/>
</dbReference>
<dbReference type="Gene3D" id="3.40.1190.20">
    <property type="match status" value="1"/>
</dbReference>
<dbReference type="Gene3D" id="3.40.50.620">
    <property type="entry name" value="HUPs"/>
    <property type="match status" value="1"/>
</dbReference>
<dbReference type="HAMAP" id="MF_01603">
    <property type="entry name" value="HldE"/>
    <property type="match status" value="1"/>
</dbReference>
<dbReference type="InterPro" id="IPR023030">
    <property type="entry name" value="Bifunc_HldE"/>
</dbReference>
<dbReference type="InterPro" id="IPR002173">
    <property type="entry name" value="Carboh/pur_kinase_PfkB_CS"/>
</dbReference>
<dbReference type="InterPro" id="IPR004821">
    <property type="entry name" value="Cyt_trans-like"/>
</dbReference>
<dbReference type="InterPro" id="IPR011611">
    <property type="entry name" value="PfkB_dom"/>
</dbReference>
<dbReference type="InterPro" id="IPR011913">
    <property type="entry name" value="RfaE_dom_I"/>
</dbReference>
<dbReference type="InterPro" id="IPR011914">
    <property type="entry name" value="RfaE_dom_II"/>
</dbReference>
<dbReference type="InterPro" id="IPR029056">
    <property type="entry name" value="Ribokinase-like"/>
</dbReference>
<dbReference type="InterPro" id="IPR014729">
    <property type="entry name" value="Rossmann-like_a/b/a_fold"/>
</dbReference>
<dbReference type="NCBIfam" id="TIGR00125">
    <property type="entry name" value="cyt_tran_rel"/>
    <property type="match status" value="1"/>
</dbReference>
<dbReference type="NCBIfam" id="NF008454">
    <property type="entry name" value="PRK11316.1"/>
    <property type="match status" value="1"/>
</dbReference>
<dbReference type="NCBIfam" id="TIGR02198">
    <property type="entry name" value="rfaE_dom_I"/>
    <property type="match status" value="1"/>
</dbReference>
<dbReference type="NCBIfam" id="TIGR02199">
    <property type="entry name" value="rfaE_dom_II"/>
    <property type="match status" value="1"/>
</dbReference>
<dbReference type="PANTHER" id="PTHR46969">
    <property type="entry name" value="BIFUNCTIONAL PROTEIN HLDE"/>
    <property type="match status" value="1"/>
</dbReference>
<dbReference type="PANTHER" id="PTHR46969:SF1">
    <property type="entry name" value="BIFUNCTIONAL PROTEIN HLDE"/>
    <property type="match status" value="1"/>
</dbReference>
<dbReference type="Pfam" id="PF01467">
    <property type="entry name" value="CTP_transf_like"/>
    <property type="match status" value="1"/>
</dbReference>
<dbReference type="Pfam" id="PF00294">
    <property type="entry name" value="PfkB"/>
    <property type="match status" value="1"/>
</dbReference>
<dbReference type="SUPFAM" id="SSF52374">
    <property type="entry name" value="Nucleotidylyl transferase"/>
    <property type="match status" value="1"/>
</dbReference>
<dbReference type="SUPFAM" id="SSF53613">
    <property type="entry name" value="Ribokinase-like"/>
    <property type="match status" value="1"/>
</dbReference>
<dbReference type="PROSITE" id="PS00583">
    <property type="entry name" value="PFKB_KINASES_1"/>
    <property type="match status" value="1"/>
</dbReference>
<accession>Q665V3</accession>
<organism>
    <name type="scientific">Yersinia pseudotuberculosis serotype I (strain IP32953)</name>
    <dbReference type="NCBI Taxonomy" id="273123"/>
    <lineage>
        <taxon>Bacteria</taxon>
        <taxon>Pseudomonadati</taxon>
        <taxon>Pseudomonadota</taxon>
        <taxon>Gammaproteobacteria</taxon>
        <taxon>Enterobacterales</taxon>
        <taxon>Yersiniaceae</taxon>
        <taxon>Yersinia</taxon>
    </lineage>
</organism>
<gene>
    <name evidence="1" type="primary">hldE</name>
    <name type="ordered locus">YPTB3407</name>
</gene>
<reference key="1">
    <citation type="journal article" date="2004" name="Proc. Natl. Acad. Sci. U.S.A.">
        <title>Insights into the evolution of Yersinia pestis through whole-genome comparison with Yersinia pseudotuberculosis.</title>
        <authorList>
            <person name="Chain P.S.G."/>
            <person name="Carniel E."/>
            <person name="Larimer F.W."/>
            <person name="Lamerdin J."/>
            <person name="Stoutland P.O."/>
            <person name="Regala W.M."/>
            <person name="Georgescu A.M."/>
            <person name="Vergez L.M."/>
            <person name="Land M.L."/>
            <person name="Motin V.L."/>
            <person name="Brubaker R.R."/>
            <person name="Fowler J."/>
            <person name="Hinnebusch J."/>
            <person name="Marceau M."/>
            <person name="Medigue C."/>
            <person name="Simonet M."/>
            <person name="Chenal-Francisque V."/>
            <person name="Souza B."/>
            <person name="Dacheux D."/>
            <person name="Elliott J.M."/>
            <person name="Derbise A."/>
            <person name="Hauser L.J."/>
            <person name="Garcia E."/>
        </authorList>
    </citation>
    <scope>NUCLEOTIDE SEQUENCE [LARGE SCALE GENOMIC DNA]</scope>
    <source>
        <strain>IP32953</strain>
    </source>
</reference>
<proteinExistence type="inferred from homology"/>
<feature type="chain" id="PRO_0000255791" description="Bifunctional protein HldE">
    <location>
        <begin position="1"/>
        <end position="476"/>
    </location>
</feature>
<feature type="region of interest" description="Ribokinase">
    <location>
        <begin position="1"/>
        <end position="318"/>
    </location>
</feature>
<feature type="region of interest" description="Cytidylyltransferase">
    <location>
        <begin position="344"/>
        <end position="476"/>
    </location>
</feature>
<feature type="active site" evidence="1">
    <location>
        <position position="264"/>
    </location>
</feature>
<feature type="binding site" evidence="1">
    <location>
        <begin position="195"/>
        <end position="198"/>
    </location>
    <ligand>
        <name>ATP</name>
        <dbReference type="ChEBI" id="CHEBI:30616"/>
    </ligand>
</feature>
<protein>
    <recommendedName>
        <fullName evidence="1">Bifunctional protein HldE</fullName>
    </recommendedName>
    <domain>
        <recommendedName>
            <fullName evidence="1">D-beta-D-heptose 7-phosphate kinase</fullName>
            <ecNumber evidence="1">2.7.1.167</ecNumber>
        </recommendedName>
        <alternativeName>
            <fullName evidence="1">D-beta-D-heptose 7-phosphotransferase</fullName>
        </alternativeName>
        <alternativeName>
            <fullName evidence="1">D-glycero-beta-D-manno-heptose-7-phosphate kinase</fullName>
        </alternativeName>
    </domain>
    <domain>
        <recommendedName>
            <fullName evidence="1">D-beta-D-heptose 1-phosphate adenylyltransferase</fullName>
            <ecNumber evidence="1">2.7.7.70</ecNumber>
        </recommendedName>
        <alternativeName>
            <fullName evidence="1">D-glycero-beta-D-manno-heptose 1-phosphate adenylyltransferase</fullName>
        </alternativeName>
    </domain>
</protein>
<comment type="function">
    <text evidence="1">Catalyzes the phosphorylation of D-glycero-D-manno-heptose 7-phosphate at the C-1 position to selectively form D-glycero-beta-D-manno-heptose-1,7-bisphosphate.</text>
</comment>
<comment type="function">
    <text evidence="1">Catalyzes the ADP transfer from ATP to D-glycero-beta-D-manno-heptose 1-phosphate, yielding ADP-D-glycero-beta-D-manno-heptose.</text>
</comment>
<comment type="catalytic activity">
    <reaction evidence="1">
        <text>D-glycero-beta-D-manno-heptose 7-phosphate + ATP = D-glycero-beta-D-manno-heptose 1,7-bisphosphate + ADP + H(+)</text>
        <dbReference type="Rhea" id="RHEA:27473"/>
        <dbReference type="ChEBI" id="CHEBI:15378"/>
        <dbReference type="ChEBI" id="CHEBI:30616"/>
        <dbReference type="ChEBI" id="CHEBI:60204"/>
        <dbReference type="ChEBI" id="CHEBI:60208"/>
        <dbReference type="ChEBI" id="CHEBI:456216"/>
        <dbReference type="EC" id="2.7.1.167"/>
    </reaction>
</comment>
<comment type="catalytic activity">
    <reaction evidence="1">
        <text>D-glycero-beta-D-manno-heptose 1-phosphate + ATP + H(+) = ADP-D-glycero-beta-D-manno-heptose + diphosphate</text>
        <dbReference type="Rhea" id="RHEA:27465"/>
        <dbReference type="ChEBI" id="CHEBI:15378"/>
        <dbReference type="ChEBI" id="CHEBI:30616"/>
        <dbReference type="ChEBI" id="CHEBI:33019"/>
        <dbReference type="ChEBI" id="CHEBI:59967"/>
        <dbReference type="ChEBI" id="CHEBI:61593"/>
        <dbReference type="EC" id="2.7.7.70"/>
    </reaction>
</comment>
<comment type="pathway">
    <text evidence="1">Nucleotide-sugar biosynthesis; ADP-L-glycero-beta-D-manno-heptose biosynthesis; ADP-L-glycero-beta-D-manno-heptose from D-glycero-beta-D-manno-heptose 7-phosphate: step 1/4.</text>
</comment>
<comment type="pathway">
    <text evidence="1">Nucleotide-sugar biosynthesis; ADP-L-glycero-beta-D-manno-heptose biosynthesis; ADP-L-glycero-beta-D-manno-heptose from D-glycero-beta-D-manno-heptose 7-phosphate: step 3/4.</text>
</comment>
<comment type="subunit">
    <text evidence="1">Homodimer.</text>
</comment>
<comment type="similarity">
    <text evidence="1">In the N-terminal section; belongs to the carbohydrate kinase PfkB family.</text>
</comment>
<comment type="similarity">
    <text evidence="1">In the C-terminal section; belongs to the cytidylyltransferase family.</text>
</comment>
<keyword id="KW-0067">ATP-binding</keyword>
<keyword id="KW-0119">Carbohydrate metabolism</keyword>
<keyword id="KW-0418">Kinase</keyword>
<keyword id="KW-0511">Multifunctional enzyme</keyword>
<keyword id="KW-0547">Nucleotide-binding</keyword>
<keyword id="KW-0548">Nucleotidyltransferase</keyword>
<keyword id="KW-0808">Transferase</keyword>